<organism>
    <name type="scientific">Homo sapiens</name>
    <name type="common">Human</name>
    <dbReference type="NCBI Taxonomy" id="9606"/>
    <lineage>
        <taxon>Eukaryota</taxon>
        <taxon>Metazoa</taxon>
        <taxon>Chordata</taxon>
        <taxon>Craniata</taxon>
        <taxon>Vertebrata</taxon>
        <taxon>Euteleostomi</taxon>
        <taxon>Mammalia</taxon>
        <taxon>Eutheria</taxon>
        <taxon>Euarchontoglires</taxon>
        <taxon>Primates</taxon>
        <taxon>Haplorrhini</taxon>
        <taxon>Catarrhini</taxon>
        <taxon>Hominidae</taxon>
        <taxon>Homo</taxon>
    </lineage>
</organism>
<sequence>MEGDGSDPEPPDAGEDSKSENGENAPIYCICRKPDINCFMIGCDNCNEWFHGDCIRITEKMAKAIREWYCRECREKDPKLEIRYRHKKSRERDGNERDSSEPRDEGGGRKRPVPDPDLQRRAGSGTGVGAMLARGSASPHKSSPQPLVATPSQHHQQQQQQIKRSARMCGECEACRRTEDCGHCDFCRDMKKFGGPNKIRQKCRLRQCQLRARESYKYFPSSLSPVTPSESLPRPRRPLPTQQQPQPSQKLGRIREDEGAVASSTVKEPPEATATPEPLSDEDLPLDPDLYQDFCAGAFDDHGLPWMSDTEESPFLDPALRKRAVKVKHVKRREKKSEKKKEERYKRHRQKQKHKDKWKHPERADAKDPASLPQCLGPGCVRPAQPSSKYCSDDCGMKLAANRIYEILPQRIQQWQQSPCIAEEHGKKLLERIRREQQSARTRLQEMERRFHELEAIILRAKQQAVREDEESNEGDSDDTDLQIFCVSCGHPINPRVALRHMERCYAKYESQTSFGSMYPTRIEGATRLFCDVYNPQSKTYCKRLQVLCPEHSRDPKVPADEVCGCPLVRDVFELTGDFCRLPKRQCNRHYCWEKLRRAEVDLERVRVWYKLDELFEQERNVRTAMTNRAGLLALMLHQTIQHDPLTTDLRSSADR</sequence>
<gene>
    <name type="primary">CXXC1</name>
    <name type="synonym">CFP1</name>
    <name type="synonym">CGBP</name>
    <name type="synonym">PCCX1</name>
    <name type="synonym">PHF18</name>
</gene>
<name>CXXC1_HUMAN</name>
<accession>Q9P0U4</accession>
<accession>B2RC03</accession>
<accession>Q8N2W4</accession>
<accession>Q96BC8</accession>
<accession>Q9P2V7</accession>
<feature type="chain" id="PRO_0000079743" description="CXXC-type zinc finger protein 1">
    <location>
        <begin position="1"/>
        <end position="656"/>
    </location>
</feature>
<feature type="zinc finger region" description="PHD-type" evidence="3">
    <location>
        <begin position="28"/>
        <end position="76"/>
    </location>
</feature>
<feature type="zinc finger region" description="CXXC-type" evidence="4">
    <location>
        <begin position="160"/>
        <end position="209"/>
    </location>
</feature>
<feature type="region of interest" description="Disordered" evidence="5">
    <location>
        <begin position="1"/>
        <end position="20"/>
    </location>
</feature>
<feature type="region of interest" description="Disordered" evidence="5">
    <location>
        <begin position="84"/>
        <end position="162"/>
    </location>
</feature>
<feature type="region of interest" description="Disordered" evidence="5">
    <location>
        <begin position="219"/>
        <end position="287"/>
    </location>
</feature>
<feature type="region of interest" description="Disordered" evidence="5">
    <location>
        <begin position="311"/>
        <end position="373"/>
    </location>
</feature>
<feature type="coiled-coil region" evidence="2">
    <location>
        <begin position="422"/>
        <end position="474"/>
    </location>
</feature>
<feature type="compositionally biased region" description="Acidic residues" evidence="5">
    <location>
        <begin position="1"/>
        <end position="14"/>
    </location>
</feature>
<feature type="compositionally biased region" description="Basic and acidic residues" evidence="5">
    <location>
        <begin position="90"/>
        <end position="120"/>
    </location>
</feature>
<feature type="compositionally biased region" description="Low complexity" evidence="5">
    <location>
        <begin position="239"/>
        <end position="249"/>
    </location>
</feature>
<feature type="compositionally biased region" description="Basic residues" evidence="5">
    <location>
        <begin position="321"/>
        <end position="334"/>
    </location>
</feature>
<feature type="compositionally biased region" description="Basic and acidic residues" evidence="5">
    <location>
        <begin position="335"/>
        <end position="345"/>
    </location>
</feature>
<feature type="compositionally biased region" description="Basic residues" evidence="5">
    <location>
        <begin position="346"/>
        <end position="358"/>
    </location>
</feature>
<feature type="compositionally biased region" description="Basic and acidic residues" evidence="5">
    <location>
        <begin position="359"/>
        <end position="368"/>
    </location>
</feature>
<feature type="binding site" evidence="4">
    <location>
        <position position="169"/>
    </location>
    <ligand>
        <name>Zn(2+)</name>
        <dbReference type="ChEBI" id="CHEBI:29105"/>
        <label>1</label>
    </ligand>
</feature>
<feature type="binding site" evidence="4">
    <location>
        <position position="172"/>
    </location>
    <ligand>
        <name>Zn(2+)</name>
        <dbReference type="ChEBI" id="CHEBI:29105"/>
        <label>1</label>
    </ligand>
</feature>
<feature type="binding site" evidence="4">
    <location>
        <position position="175"/>
    </location>
    <ligand>
        <name>Zn(2+)</name>
        <dbReference type="ChEBI" id="CHEBI:29105"/>
        <label>1</label>
    </ligand>
</feature>
<feature type="binding site" evidence="4">
    <location>
        <position position="181"/>
    </location>
    <ligand>
        <name>Zn(2+)</name>
        <dbReference type="ChEBI" id="CHEBI:29105"/>
        <label>2</label>
    </ligand>
</feature>
<feature type="binding site" evidence="4">
    <location>
        <position position="184"/>
    </location>
    <ligand>
        <name>Zn(2+)</name>
        <dbReference type="ChEBI" id="CHEBI:29105"/>
        <label>2</label>
    </ligand>
</feature>
<feature type="binding site" evidence="4">
    <location>
        <position position="187"/>
    </location>
    <ligand>
        <name>Zn(2+)</name>
        <dbReference type="ChEBI" id="CHEBI:29105"/>
        <label>2</label>
    </ligand>
</feature>
<feature type="binding site" evidence="4">
    <location>
        <position position="203"/>
    </location>
    <ligand>
        <name>Zn(2+)</name>
        <dbReference type="ChEBI" id="CHEBI:29105"/>
        <label>2</label>
    </ligand>
</feature>
<feature type="binding site" evidence="4">
    <location>
        <position position="208"/>
    </location>
    <ligand>
        <name>Zn(2+)</name>
        <dbReference type="ChEBI" id="CHEBI:29105"/>
        <label>1</label>
    </ligand>
</feature>
<feature type="modified residue" description="N-acetylmethionine" evidence="17">
    <location>
        <position position="1"/>
    </location>
</feature>
<feature type="modified residue" description="Phosphoserine" evidence="17">
    <location>
        <position position="6"/>
    </location>
</feature>
<feature type="modified residue" description="Phosphoserine" evidence="17">
    <location>
        <position position="19"/>
    </location>
</feature>
<feature type="modified residue" description="Phosphoserine" evidence="18">
    <location>
        <position position="124"/>
    </location>
</feature>
<feature type="modified residue" description="Phosphoserine" evidence="18">
    <location>
        <position position="224"/>
    </location>
</feature>
<feature type="modified residue" description="Phosphothreonine" evidence="16">
    <location>
        <position position="227"/>
    </location>
</feature>
<feature type="cross-link" description="Glycyl lysine isopeptide (Lys-Gly) (interchain with G-Cter in SUMO2)" evidence="19 20">
    <location>
        <position position="250"/>
    </location>
</feature>
<feature type="splice variant" id="VSP_040132" description="In isoform 2." evidence="14">
    <original>K</original>
    <variation>KVMER</variation>
    <location>
        <position position="340"/>
    </location>
</feature>
<feature type="mutagenesis site" description="Complete loss of DNA binding activity. No effect on localization in nuclear speckles." evidence="6">
    <original>C</original>
    <variation>A</variation>
    <location>
        <position position="169"/>
    </location>
</feature>
<feature type="mutagenesis site" description="Complete loss of DNA binding activity. No effect on localization in nuclear speckles." evidence="6">
    <original>C</original>
    <variation>A</variation>
    <location>
        <position position="208"/>
    </location>
</feature>
<feature type="sequence conflict" description="In Ref. 1; AAF37799." evidence="15" ref="1">
    <original>D</original>
    <variation>N</variation>
    <location>
        <position position="117"/>
    </location>
</feature>
<feature type="sequence conflict" description="In Ref. 4; BAG37400." evidence="15" ref="4">
    <original>C</original>
    <variation>R</variation>
    <location>
        <position position="175"/>
    </location>
</feature>
<feature type="sequence conflict" description="In Ref. 4; BAG37400." evidence="15" ref="4">
    <original>P</original>
    <variation>S</variation>
    <location>
        <position position="235"/>
    </location>
</feature>
<feature type="sequence conflict" description="In Ref. 1; AAF37799." evidence="15" ref="1">
    <original>H</original>
    <variation>N</variation>
    <location>
        <position position="302"/>
    </location>
</feature>
<feature type="strand" evidence="22">
    <location>
        <begin position="170"/>
        <end position="172"/>
    </location>
</feature>
<feature type="helix" evidence="22">
    <location>
        <begin position="173"/>
        <end position="176"/>
    </location>
</feature>
<feature type="strand" evidence="21">
    <location>
        <begin position="182"/>
        <end position="184"/>
    </location>
</feature>
<feature type="helix" evidence="22">
    <location>
        <begin position="185"/>
        <end position="189"/>
    </location>
</feature>
<feature type="helix" evidence="22">
    <location>
        <begin position="191"/>
        <end position="193"/>
    </location>
</feature>
<feature type="helix" evidence="22">
    <location>
        <begin position="204"/>
        <end position="206"/>
    </location>
</feature>
<feature type="turn" evidence="22">
    <location>
        <begin position="209"/>
        <end position="211"/>
    </location>
</feature>
<feature type="helix" evidence="22">
    <location>
        <begin position="214"/>
        <end position="216"/>
    </location>
</feature>
<reference key="1">
    <citation type="journal article" date="2000" name="Mol. Cell. Biol.">
        <title>Cloning of a mammalian transcriptional activator that binds unmethylated CpG motifs and shares a CXXC domain with DNA methyltransferase, human trithorax, and methyl-CpG binding domain protein 1.</title>
        <authorList>
            <person name="Voo K.S."/>
            <person name="Carlone D.L."/>
            <person name="Jacobsen B.M."/>
            <person name="Flodin A."/>
            <person name="Skalnik D.G."/>
        </authorList>
    </citation>
    <scope>NUCLEOTIDE SEQUENCE [MRNA] (ISOFORM 1)</scope>
</reference>
<reference key="2">
    <citation type="journal article" date="2000" name="Biochem. Biophys. Res. Commun.">
        <title>PCCX1, a novel DNA-binding protein with PHD finger and CXXC domain, is regulated by proteolysis.</title>
        <authorList>
            <person name="Fujino T."/>
            <person name="Hasegawa M."/>
            <person name="Shibata S."/>
            <person name="Kishimoto T."/>
            <person name="Imai S."/>
            <person name="Takano T."/>
        </authorList>
    </citation>
    <scope>NUCLEOTIDE SEQUENCE [MRNA] (ISOFORM 1)</scope>
    <scope>DNA-BINDING</scope>
</reference>
<reference key="3">
    <citation type="journal article" date="2001" name="Genome Res.">
        <title>Towards a catalog of human genes and proteins: sequencing and analysis of 500 novel complete protein coding human cDNAs.</title>
        <authorList>
            <person name="Wiemann S."/>
            <person name="Weil B."/>
            <person name="Wellenreuther R."/>
            <person name="Gassenhuber J."/>
            <person name="Glassl S."/>
            <person name="Ansorge W."/>
            <person name="Boecher M."/>
            <person name="Bloecker H."/>
            <person name="Bauersachs S."/>
            <person name="Blum H."/>
            <person name="Lauber J."/>
            <person name="Duesterhoeft A."/>
            <person name="Beyer A."/>
            <person name="Koehrer K."/>
            <person name="Strack N."/>
            <person name="Mewes H.-W."/>
            <person name="Ottenwaelder B."/>
            <person name="Obermaier B."/>
            <person name="Tampe J."/>
            <person name="Heubner D."/>
            <person name="Wambutt R."/>
            <person name="Korn B."/>
            <person name="Klein M."/>
            <person name="Poustka A."/>
        </authorList>
    </citation>
    <scope>NUCLEOTIDE SEQUENCE [LARGE SCALE MRNA] (ISOFORM 1)</scope>
    <source>
        <tissue>Testis</tissue>
    </source>
</reference>
<reference key="4">
    <citation type="journal article" date="2004" name="Nat. Genet.">
        <title>Complete sequencing and characterization of 21,243 full-length human cDNAs.</title>
        <authorList>
            <person name="Ota T."/>
            <person name="Suzuki Y."/>
            <person name="Nishikawa T."/>
            <person name="Otsuki T."/>
            <person name="Sugiyama T."/>
            <person name="Irie R."/>
            <person name="Wakamatsu A."/>
            <person name="Hayashi K."/>
            <person name="Sato H."/>
            <person name="Nagai K."/>
            <person name="Kimura K."/>
            <person name="Makita H."/>
            <person name="Sekine M."/>
            <person name="Obayashi M."/>
            <person name="Nishi T."/>
            <person name="Shibahara T."/>
            <person name="Tanaka T."/>
            <person name="Ishii S."/>
            <person name="Yamamoto J."/>
            <person name="Saito K."/>
            <person name="Kawai Y."/>
            <person name="Isono Y."/>
            <person name="Nakamura Y."/>
            <person name="Nagahari K."/>
            <person name="Murakami K."/>
            <person name="Yasuda T."/>
            <person name="Iwayanagi T."/>
            <person name="Wagatsuma M."/>
            <person name="Shiratori A."/>
            <person name="Sudo H."/>
            <person name="Hosoiri T."/>
            <person name="Kaku Y."/>
            <person name="Kodaira H."/>
            <person name="Kondo H."/>
            <person name="Sugawara M."/>
            <person name="Takahashi M."/>
            <person name="Kanda K."/>
            <person name="Yokoi T."/>
            <person name="Furuya T."/>
            <person name="Kikkawa E."/>
            <person name="Omura Y."/>
            <person name="Abe K."/>
            <person name="Kamihara K."/>
            <person name="Katsuta N."/>
            <person name="Sato K."/>
            <person name="Tanikawa M."/>
            <person name="Yamazaki M."/>
            <person name="Ninomiya K."/>
            <person name="Ishibashi T."/>
            <person name="Yamashita H."/>
            <person name="Murakawa K."/>
            <person name="Fujimori K."/>
            <person name="Tanai H."/>
            <person name="Kimata M."/>
            <person name="Watanabe M."/>
            <person name="Hiraoka S."/>
            <person name="Chiba Y."/>
            <person name="Ishida S."/>
            <person name="Ono Y."/>
            <person name="Takiguchi S."/>
            <person name="Watanabe S."/>
            <person name="Yosida M."/>
            <person name="Hotuta T."/>
            <person name="Kusano J."/>
            <person name="Kanehori K."/>
            <person name="Takahashi-Fujii A."/>
            <person name="Hara H."/>
            <person name="Tanase T.-O."/>
            <person name="Nomura Y."/>
            <person name="Togiya S."/>
            <person name="Komai F."/>
            <person name="Hara R."/>
            <person name="Takeuchi K."/>
            <person name="Arita M."/>
            <person name="Imose N."/>
            <person name="Musashino K."/>
            <person name="Yuuki H."/>
            <person name="Oshima A."/>
            <person name="Sasaki N."/>
            <person name="Aotsuka S."/>
            <person name="Yoshikawa Y."/>
            <person name="Matsunawa H."/>
            <person name="Ichihara T."/>
            <person name="Shiohata N."/>
            <person name="Sano S."/>
            <person name="Moriya S."/>
            <person name="Momiyama H."/>
            <person name="Satoh N."/>
            <person name="Takami S."/>
            <person name="Terashima Y."/>
            <person name="Suzuki O."/>
            <person name="Nakagawa S."/>
            <person name="Senoh A."/>
            <person name="Mizoguchi H."/>
            <person name="Goto Y."/>
            <person name="Shimizu F."/>
            <person name="Wakebe H."/>
            <person name="Hishigaki H."/>
            <person name="Watanabe T."/>
            <person name="Sugiyama A."/>
            <person name="Takemoto M."/>
            <person name="Kawakami B."/>
            <person name="Yamazaki M."/>
            <person name="Watanabe K."/>
            <person name="Kumagai A."/>
            <person name="Itakura S."/>
            <person name="Fukuzumi Y."/>
            <person name="Fujimori Y."/>
            <person name="Komiyama M."/>
            <person name="Tashiro H."/>
            <person name="Tanigami A."/>
            <person name="Fujiwara T."/>
            <person name="Ono T."/>
            <person name="Yamada K."/>
            <person name="Fujii Y."/>
            <person name="Ozaki K."/>
            <person name="Hirao M."/>
            <person name="Ohmori Y."/>
            <person name="Kawabata A."/>
            <person name="Hikiji T."/>
            <person name="Kobatake N."/>
            <person name="Inagaki H."/>
            <person name="Ikema Y."/>
            <person name="Okamoto S."/>
            <person name="Okitani R."/>
            <person name="Kawakami T."/>
            <person name="Noguchi S."/>
            <person name="Itoh T."/>
            <person name="Shigeta K."/>
            <person name="Senba T."/>
            <person name="Matsumura K."/>
            <person name="Nakajima Y."/>
            <person name="Mizuno T."/>
            <person name="Morinaga M."/>
            <person name="Sasaki M."/>
            <person name="Togashi T."/>
            <person name="Oyama M."/>
            <person name="Hata H."/>
            <person name="Watanabe M."/>
            <person name="Komatsu T."/>
            <person name="Mizushima-Sugano J."/>
            <person name="Satoh T."/>
            <person name="Shirai Y."/>
            <person name="Takahashi Y."/>
            <person name="Nakagawa K."/>
            <person name="Okumura K."/>
            <person name="Nagase T."/>
            <person name="Nomura N."/>
            <person name="Kikuchi H."/>
            <person name="Masuho Y."/>
            <person name="Yamashita R."/>
            <person name="Nakai K."/>
            <person name="Yada T."/>
            <person name="Nakamura Y."/>
            <person name="Ohara O."/>
            <person name="Isogai T."/>
            <person name="Sugano S."/>
        </authorList>
    </citation>
    <scope>NUCLEOTIDE SEQUENCE [LARGE SCALE MRNA] (ISOFORM 1)</scope>
</reference>
<reference key="5">
    <citation type="journal article" date="2005" name="Nature">
        <title>DNA sequence and analysis of human chromosome 18.</title>
        <authorList>
            <person name="Nusbaum C."/>
            <person name="Zody M.C."/>
            <person name="Borowsky M.L."/>
            <person name="Kamal M."/>
            <person name="Kodira C.D."/>
            <person name="Taylor T.D."/>
            <person name="Whittaker C.A."/>
            <person name="Chang J.L."/>
            <person name="Cuomo C.A."/>
            <person name="Dewar K."/>
            <person name="FitzGerald M.G."/>
            <person name="Yang X."/>
            <person name="Abouelleil A."/>
            <person name="Allen N.R."/>
            <person name="Anderson S."/>
            <person name="Bloom T."/>
            <person name="Bugalter B."/>
            <person name="Butler J."/>
            <person name="Cook A."/>
            <person name="DeCaprio D."/>
            <person name="Engels R."/>
            <person name="Garber M."/>
            <person name="Gnirke A."/>
            <person name="Hafez N."/>
            <person name="Hall J.L."/>
            <person name="Norman C.H."/>
            <person name="Itoh T."/>
            <person name="Jaffe D.B."/>
            <person name="Kuroki Y."/>
            <person name="Lehoczky J."/>
            <person name="Lui A."/>
            <person name="Macdonald P."/>
            <person name="Mauceli E."/>
            <person name="Mikkelsen T.S."/>
            <person name="Naylor J.W."/>
            <person name="Nicol R."/>
            <person name="Nguyen C."/>
            <person name="Noguchi H."/>
            <person name="O'Leary S.B."/>
            <person name="Piqani B."/>
            <person name="Smith C.L."/>
            <person name="Talamas J.A."/>
            <person name="Topham K."/>
            <person name="Totoki Y."/>
            <person name="Toyoda A."/>
            <person name="Wain H.M."/>
            <person name="Young S.K."/>
            <person name="Zeng Q."/>
            <person name="Zimmer A.R."/>
            <person name="Fujiyama A."/>
            <person name="Hattori M."/>
            <person name="Birren B.W."/>
            <person name="Sakaki Y."/>
            <person name="Lander E.S."/>
        </authorList>
    </citation>
    <scope>NUCLEOTIDE SEQUENCE [LARGE SCALE GENOMIC DNA]</scope>
</reference>
<reference key="6">
    <citation type="journal article" date="2004" name="Genome Res.">
        <title>The status, quality, and expansion of the NIH full-length cDNA project: the Mammalian Gene Collection (MGC).</title>
        <authorList>
            <consortium name="The MGC Project Team"/>
        </authorList>
    </citation>
    <scope>NUCLEOTIDE SEQUENCE [LARGE SCALE MRNA] (ISOFORMS 1 AND 2)</scope>
    <source>
        <tissue>Cervix</tissue>
        <tissue>Colon</tissue>
        <tissue>Skin</tissue>
    </source>
</reference>
<reference key="7">
    <citation type="journal article" date="2001" name="J. Biol. Chem.">
        <title>Identification and characterization of the DNA binding domain of CpG-binding protein.</title>
        <authorList>
            <person name="Lee J.-H."/>
            <person name="Voo K.S."/>
            <person name="Skalnik D.G."/>
        </authorList>
    </citation>
    <scope>DNA-BINDING DOMAIN</scope>
    <scope>MUTAGENESIS OF CYS-169 AND CYS-208</scope>
</reference>
<reference key="8">
    <citation type="journal article" date="2002" name="J. Biol. Chem.">
        <title>CpG-binding protein is a nuclear matrix- and euchromatin-associated protein localized to nuclear speckles containing human trithorax. Identification of nuclear matrix targeting signals.</title>
        <authorList>
            <person name="Lee J.-H."/>
            <person name="Skalnik D.G."/>
        </authorList>
    </citation>
    <scope>SUBCELLULAR LOCATION</scope>
</reference>
<reference key="9">
    <citation type="journal article" date="2005" name="J. Biol. Chem.">
        <title>CpG-binding protein (CXXC finger protein 1) is a component of the mammalian Set1 histone H3-Lys4 methyltransferase complex, the analogue of the yeast Set1/COMPASS complex.</title>
        <authorList>
            <person name="Lee J.-H."/>
            <person name="Skalnik D.G."/>
        </authorList>
    </citation>
    <scope>IDENTIFICATION IN THE SET1 COMPLEX</scope>
</reference>
<reference key="10">
    <citation type="journal article" date="2007" name="J. Biol. Chem.">
        <title>Identification and characterization of the human Set1B histone H3-Lys4 methyltransferase complex.</title>
        <authorList>
            <person name="Lee J.-H."/>
            <person name="Tate C.M."/>
            <person name="You J.-S."/>
            <person name="Skalnik D.G."/>
        </authorList>
    </citation>
    <scope>IDENTIFICATION IN THE SET1 COMPLEX</scope>
    <scope>SUBCELLULAR LOCATION</scope>
</reference>
<reference key="11">
    <citation type="journal article" date="2008" name="Mol. Cell. Biol.">
        <title>Wdr82 is a C-terminal domain-binding protein that recruits the Setd1A Histone H3-Lys4 methyltransferase complex to transcription start sites of transcribed human genes.</title>
        <authorList>
            <person name="Lee J.H."/>
            <person name="Skalnik D.G."/>
        </authorList>
    </citation>
    <scope>IDENTIFICATION IN SET1 COMPLEX</scope>
    <scope>INTERACTION WITH SETD1A</scope>
</reference>
<reference key="12">
    <citation type="journal article" date="2008" name="Mol. Cell. Biol.">
        <title>Molecular regulation of H3K4 trimethylation by Wdr82, a component of human Set1/COMPASS.</title>
        <authorList>
            <person name="Wu M."/>
            <person name="Wang P.F."/>
            <person name="Lee J.S."/>
            <person name="Martin-Brown S."/>
            <person name="Florens L."/>
            <person name="Washburn M."/>
            <person name="Shilatifard A."/>
        </authorList>
    </citation>
    <scope>IDENTIFICATION IN SET1 COMPLEX</scope>
</reference>
<reference key="13">
    <citation type="journal article" date="2008" name="Proc. Natl. Acad. Sci. U.S.A.">
        <title>A quantitative atlas of mitotic phosphorylation.</title>
        <authorList>
            <person name="Dephoure N."/>
            <person name="Zhou C."/>
            <person name="Villen J."/>
            <person name="Beausoleil S.A."/>
            <person name="Bakalarski C.E."/>
            <person name="Elledge S.J."/>
            <person name="Gygi S.P."/>
        </authorList>
    </citation>
    <scope>PHOSPHORYLATION [LARGE SCALE ANALYSIS] AT THR-227</scope>
    <scope>IDENTIFICATION BY MASS SPECTROMETRY [LARGE SCALE ANALYSIS]</scope>
    <source>
        <tissue>Cervix carcinoma</tissue>
    </source>
</reference>
<reference key="14">
    <citation type="journal article" date="2011" name="BMC Syst. Biol.">
        <title>Initial characterization of the human central proteome.</title>
        <authorList>
            <person name="Burkard T.R."/>
            <person name="Planyavsky M."/>
            <person name="Kaupe I."/>
            <person name="Breitwieser F.P."/>
            <person name="Buerckstuemmer T."/>
            <person name="Bennett K.L."/>
            <person name="Superti-Furga G."/>
            <person name="Colinge J."/>
        </authorList>
    </citation>
    <scope>IDENTIFICATION BY MASS SPECTROMETRY [LARGE SCALE ANALYSIS]</scope>
</reference>
<reference key="15">
    <citation type="journal article" date="2011" name="Sci. Signal.">
        <title>System-wide temporal characterization of the proteome and phosphoproteome of human embryonic stem cell differentiation.</title>
        <authorList>
            <person name="Rigbolt K.T."/>
            <person name="Prokhorova T.A."/>
            <person name="Akimov V."/>
            <person name="Henningsen J."/>
            <person name="Johansen P.T."/>
            <person name="Kratchmarova I."/>
            <person name="Kassem M."/>
            <person name="Mann M."/>
            <person name="Olsen J.V."/>
            <person name="Blagoev B."/>
        </authorList>
    </citation>
    <scope>ACETYLATION [LARGE SCALE ANALYSIS] AT MET-1</scope>
    <scope>PHOSPHORYLATION [LARGE SCALE ANALYSIS] AT SER-6 AND SER-19</scope>
    <scope>IDENTIFICATION BY MASS SPECTROMETRY [LARGE SCALE ANALYSIS]</scope>
</reference>
<reference key="16">
    <citation type="journal article" date="2012" name="Cell">
        <title>Microcephaly gene links trithorax and REST/NRSF to control neural stem cell proliferation and differentiation.</title>
        <authorList>
            <person name="Yang Y.J."/>
            <person name="Baltus A.E."/>
            <person name="Mathew R.S."/>
            <person name="Murphy E.A."/>
            <person name="Evrony G.D."/>
            <person name="Gonzalez D.M."/>
            <person name="Wang E.P."/>
            <person name="Marshall-Walker C.A."/>
            <person name="Barry B.J."/>
            <person name="Murn J."/>
            <person name="Tatarakis A."/>
            <person name="Mahajan M.A."/>
            <person name="Samuels H.H."/>
            <person name="Shi Y."/>
            <person name="Golden J.A."/>
            <person name="Mahajnah M."/>
            <person name="Shenhav R."/>
            <person name="Walsh C.A."/>
        </authorList>
    </citation>
    <scope>INTERACTION WITH ZNF335</scope>
</reference>
<reference key="17">
    <citation type="journal article" date="2013" name="J. Proteome Res.">
        <title>Toward a comprehensive characterization of a human cancer cell phosphoproteome.</title>
        <authorList>
            <person name="Zhou H."/>
            <person name="Di Palma S."/>
            <person name="Preisinger C."/>
            <person name="Peng M."/>
            <person name="Polat A.N."/>
            <person name="Heck A.J."/>
            <person name="Mohammed S."/>
        </authorList>
    </citation>
    <scope>PHOSPHORYLATION [LARGE SCALE ANALYSIS] AT SER-124 AND SER-224</scope>
    <scope>IDENTIFICATION BY MASS SPECTROMETRY [LARGE SCALE ANALYSIS]</scope>
    <source>
        <tissue>Cervix carcinoma</tissue>
        <tissue>Erythroleukemia</tissue>
    </source>
</reference>
<reference key="18">
    <citation type="journal article" date="2014" name="Nat. Struct. Mol. Biol.">
        <title>Uncovering global SUMOylation signaling networks in a site-specific manner.</title>
        <authorList>
            <person name="Hendriks I.A."/>
            <person name="D'Souza R.C."/>
            <person name="Yang B."/>
            <person name="Verlaan-de Vries M."/>
            <person name="Mann M."/>
            <person name="Vertegaal A.C."/>
        </authorList>
    </citation>
    <scope>SUMOYLATION [LARGE SCALE ANALYSIS] AT LYS-250</scope>
    <scope>IDENTIFICATION BY MASS SPECTROMETRY [LARGE SCALE ANALYSIS]</scope>
</reference>
<reference key="19">
    <citation type="journal article" date="2017" name="Nat. Struct. Mol. Biol.">
        <title>Site-specific mapping of the human SUMO proteome reveals co-modification with phosphorylation.</title>
        <authorList>
            <person name="Hendriks I.A."/>
            <person name="Lyon D."/>
            <person name="Young C."/>
            <person name="Jensen L.J."/>
            <person name="Vertegaal A.C."/>
            <person name="Nielsen M.L."/>
        </authorList>
    </citation>
    <scope>SUMOYLATION [LARGE SCALE ANALYSIS] AT LYS-250</scope>
    <scope>IDENTIFICATION BY MASS SPECTROMETRY [LARGE SCALE ANALYSIS]</scope>
</reference>
<reference key="20">
    <citation type="journal article" date="2011" name="Nat. Commun.">
        <title>The structural basis for selective binding of non-methylated CpG islands by the CFP1 CXXC domain.</title>
        <authorList>
            <person name="Xu C."/>
            <person name="Bian C."/>
            <person name="Lam R."/>
            <person name="Dong A."/>
            <person name="Min J."/>
        </authorList>
    </citation>
    <scope>X-RAY CRYSTALLOGRAPHY (1.9 ANGSTROMS) OF 161-222 IN COMPLEX WITH DNA</scope>
    <scope>FUNCTION</scope>
</reference>
<proteinExistence type="evidence at protein level"/>
<dbReference type="EMBL" id="AF149758">
    <property type="protein sequence ID" value="AAF37799.1"/>
    <property type="molecule type" value="mRNA"/>
</dbReference>
<dbReference type="EMBL" id="AB031069">
    <property type="protein sequence ID" value="BAA96307.1"/>
    <property type="molecule type" value="mRNA"/>
</dbReference>
<dbReference type="EMBL" id="AL136862">
    <property type="protein sequence ID" value="CAB66796.1"/>
    <property type="molecule type" value="mRNA"/>
</dbReference>
<dbReference type="EMBL" id="AK314886">
    <property type="protein sequence ID" value="BAG37400.1"/>
    <property type="molecule type" value="mRNA"/>
</dbReference>
<dbReference type="EMBL" id="AC090246">
    <property type="status" value="NOT_ANNOTATED_CDS"/>
    <property type="molecule type" value="Genomic_DNA"/>
</dbReference>
<dbReference type="EMBL" id="BC014940">
    <property type="protein sequence ID" value="AAH14940.1"/>
    <property type="molecule type" value="mRNA"/>
</dbReference>
<dbReference type="EMBL" id="BC015733">
    <property type="protein sequence ID" value="AAH15733.1"/>
    <property type="molecule type" value="mRNA"/>
</dbReference>
<dbReference type="EMBL" id="BC029922">
    <property type="protein sequence ID" value="AAH29922.1"/>
    <property type="molecule type" value="mRNA"/>
</dbReference>
<dbReference type="CCDS" id="CCDS11945.1">
    <molecule id="Q9P0U4-1"/>
</dbReference>
<dbReference type="CCDS" id="CCDS45866.1">
    <molecule id="Q9P0U4-2"/>
</dbReference>
<dbReference type="RefSeq" id="NP_001095124.1">
    <molecule id="Q9P0U4-2"/>
    <property type="nucleotide sequence ID" value="NM_001101654.2"/>
</dbReference>
<dbReference type="RefSeq" id="NP_055408.2">
    <molecule id="Q9P0U4-1"/>
    <property type="nucleotide sequence ID" value="NM_014593.4"/>
</dbReference>
<dbReference type="RefSeq" id="XP_011524242.1">
    <molecule id="Q9P0U4-2"/>
    <property type="nucleotide sequence ID" value="XM_011525940.3"/>
</dbReference>
<dbReference type="RefSeq" id="XP_016881207.1">
    <molecule id="Q9P0U4-1"/>
    <property type="nucleotide sequence ID" value="XM_017025718.3"/>
</dbReference>
<dbReference type="RefSeq" id="XP_054174527.1">
    <molecule id="Q9P0U4-2"/>
    <property type="nucleotide sequence ID" value="XM_054318552.1"/>
</dbReference>
<dbReference type="RefSeq" id="XP_054174528.1">
    <molecule id="Q9P0U4-1"/>
    <property type="nucleotide sequence ID" value="XM_054318553.1"/>
</dbReference>
<dbReference type="PDB" id="3QMB">
    <property type="method" value="X-ray"/>
    <property type="resolution" value="2.06 A"/>
    <property type="chains" value="A=161-222"/>
</dbReference>
<dbReference type="PDB" id="3QMC">
    <property type="method" value="X-ray"/>
    <property type="resolution" value="2.10 A"/>
    <property type="chains" value="A=161-222"/>
</dbReference>
<dbReference type="PDB" id="3QMD">
    <property type="method" value="X-ray"/>
    <property type="resolution" value="1.90 A"/>
    <property type="chains" value="A=161-222"/>
</dbReference>
<dbReference type="PDB" id="3QMG">
    <property type="method" value="X-ray"/>
    <property type="resolution" value="2.30 A"/>
    <property type="chains" value="A=161-222"/>
</dbReference>
<dbReference type="PDB" id="3QMH">
    <property type="method" value="X-ray"/>
    <property type="resolution" value="2.50 A"/>
    <property type="chains" value="A=161-222"/>
</dbReference>
<dbReference type="PDB" id="3QMI">
    <property type="method" value="X-ray"/>
    <property type="resolution" value="2.10 A"/>
    <property type="chains" value="A=161-222"/>
</dbReference>
<dbReference type="PDBsum" id="3QMB"/>
<dbReference type="PDBsum" id="3QMC"/>
<dbReference type="PDBsum" id="3QMD"/>
<dbReference type="PDBsum" id="3QMG"/>
<dbReference type="PDBsum" id="3QMH"/>
<dbReference type="PDBsum" id="3QMI"/>
<dbReference type="SMR" id="Q9P0U4"/>
<dbReference type="BioGRID" id="119045">
    <property type="interactions" value="134"/>
</dbReference>
<dbReference type="ComplexPortal" id="CPX-7110">
    <property type="entry name" value="Histone-lysine N-methyltransferase complex, SET1A variant"/>
</dbReference>
<dbReference type="ComplexPortal" id="CPX-7111">
    <property type="entry name" value="Histone-lysine N-methyltransferase complex, SET1B variant"/>
</dbReference>
<dbReference type="CORUM" id="Q9P0U4"/>
<dbReference type="DIP" id="DIP-50001N"/>
<dbReference type="FunCoup" id="Q9P0U4">
    <property type="interactions" value="3419"/>
</dbReference>
<dbReference type="IntAct" id="Q9P0U4">
    <property type="interactions" value="86"/>
</dbReference>
<dbReference type="MINT" id="Q9P0U4"/>
<dbReference type="STRING" id="9606.ENSP00000390475"/>
<dbReference type="ChEMBL" id="CHEMBL5169201"/>
<dbReference type="GlyGen" id="Q9P0U4">
    <property type="glycosylation" value="1 site"/>
</dbReference>
<dbReference type="iPTMnet" id="Q9P0U4"/>
<dbReference type="MetOSite" id="Q9P0U4"/>
<dbReference type="PhosphoSitePlus" id="Q9P0U4"/>
<dbReference type="SwissPalm" id="Q9P0U4"/>
<dbReference type="BioMuta" id="CXXC1"/>
<dbReference type="DMDM" id="20138037"/>
<dbReference type="jPOST" id="Q9P0U4"/>
<dbReference type="MassIVE" id="Q9P0U4"/>
<dbReference type="PaxDb" id="9606-ENSP00000390475"/>
<dbReference type="PeptideAtlas" id="Q9P0U4"/>
<dbReference type="ProteomicsDB" id="83600">
    <molecule id="Q9P0U4-1"/>
</dbReference>
<dbReference type="ProteomicsDB" id="83601">
    <molecule id="Q9P0U4-2"/>
</dbReference>
<dbReference type="Pumba" id="Q9P0U4"/>
<dbReference type="Antibodypedia" id="9406">
    <property type="antibodies" value="273 antibodies from 29 providers"/>
</dbReference>
<dbReference type="DNASU" id="30827"/>
<dbReference type="Ensembl" id="ENST00000285106.11">
    <molecule id="Q9P0U4-1"/>
    <property type="protein sequence ID" value="ENSP00000285106.6"/>
    <property type="gene ID" value="ENSG00000154832.16"/>
</dbReference>
<dbReference type="Ensembl" id="ENST00000412036.6">
    <molecule id="Q9P0U4-2"/>
    <property type="protein sequence ID" value="ENSP00000390475.1"/>
    <property type="gene ID" value="ENSG00000154832.16"/>
</dbReference>
<dbReference type="GeneID" id="30827"/>
<dbReference type="KEGG" id="hsa:30827"/>
<dbReference type="MANE-Select" id="ENST00000285106.11">
    <property type="protein sequence ID" value="ENSP00000285106.6"/>
    <property type="RefSeq nucleotide sequence ID" value="NM_014593.4"/>
    <property type="RefSeq protein sequence ID" value="NP_055408.2"/>
</dbReference>
<dbReference type="UCSC" id="uc002leq.5">
    <molecule id="Q9P0U4-1"/>
    <property type="organism name" value="human"/>
</dbReference>
<dbReference type="AGR" id="HGNC:24343"/>
<dbReference type="CTD" id="30827"/>
<dbReference type="DisGeNET" id="30827"/>
<dbReference type="GeneCards" id="CXXC1"/>
<dbReference type="HGNC" id="HGNC:24343">
    <property type="gene designation" value="CXXC1"/>
</dbReference>
<dbReference type="HPA" id="ENSG00000154832">
    <property type="expression patterns" value="Low tissue specificity"/>
</dbReference>
<dbReference type="MIM" id="609150">
    <property type="type" value="gene"/>
</dbReference>
<dbReference type="neXtProt" id="NX_Q9P0U4"/>
<dbReference type="OpenTargets" id="ENSG00000154832"/>
<dbReference type="PharmGKB" id="PA134908762"/>
<dbReference type="VEuPathDB" id="HostDB:ENSG00000154832"/>
<dbReference type="eggNOG" id="KOG1632">
    <property type="taxonomic scope" value="Eukaryota"/>
</dbReference>
<dbReference type="GeneTree" id="ENSGT00730000111044"/>
<dbReference type="HOGENOM" id="CLU_025011_2_0_1"/>
<dbReference type="InParanoid" id="Q9P0U4"/>
<dbReference type="OMA" id="IRVGHKP"/>
<dbReference type="OrthoDB" id="419183at2759"/>
<dbReference type="PAN-GO" id="Q9P0U4">
    <property type="GO annotations" value="5 GO annotations based on evolutionary models"/>
</dbReference>
<dbReference type="PhylomeDB" id="Q9P0U4"/>
<dbReference type="TreeFam" id="TF320326"/>
<dbReference type="PathwayCommons" id="Q9P0U4"/>
<dbReference type="Reactome" id="R-HSA-381038">
    <property type="pathway name" value="XBP1(S) activates chaperone genes"/>
</dbReference>
<dbReference type="Reactome" id="R-HSA-9772755">
    <property type="pathway name" value="Formation of WDR5-containing histone-modifying complexes"/>
</dbReference>
<dbReference type="SignaLink" id="Q9P0U4"/>
<dbReference type="BioGRID-ORCS" id="30827">
    <property type="hits" value="367 hits in 1170 CRISPR screens"/>
</dbReference>
<dbReference type="CD-CODE" id="804901D1">
    <property type="entry name" value="Nuclear speckle"/>
</dbReference>
<dbReference type="ChiTaRS" id="CXXC1">
    <property type="organism name" value="human"/>
</dbReference>
<dbReference type="EvolutionaryTrace" id="Q9P0U4"/>
<dbReference type="GeneWiki" id="CXXC1"/>
<dbReference type="GenomeRNAi" id="30827"/>
<dbReference type="Pharos" id="Q9P0U4">
    <property type="development level" value="Tbio"/>
</dbReference>
<dbReference type="PRO" id="PR:Q9P0U4"/>
<dbReference type="Proteomes" id="UP000005640">
    <property type="component" value="Chromosome 18"/>
</dbReference>
<dbReference type="RNAct" id="Q9P0U4">
    <property type="molecule type" value="protein"/>
</dbReference>
<dbReference type="Bgee" id="ENSG00000154832">
    <property type="expression patterns" value="Expressed in right hemisphere of cerebellum and 198 other cell types or tissues"/>
</dbReference>
<dbReference type="ExpressionAtlas" id="Q9P0U4">
    <property type="expression patterns" value="baseline and differential"/>
</dbReference>
<dbReference type="GO" id="GO:0005829">
    <property type="term" value="C:cytosol"/>
    <property type="evidence" value="ECO:0000314"/>
    <property type="project" value="HPA"/>
</dbReference>
<dbReference type="GO" id="GO:0035097">
    <property type="term" value="C:histone methyltransferase complex"/>
    <property type="evidence" value="ECO:0000314"/>
    <property type="project" value="UniProtKB"/>
</dbReference>
<dbReference type="GO" id="GO:0016363">
    <property type="term" value="C:nuclear matrix"/>
    <property type="evidence" value="ECO:0007669"/>
    <property type="project" value="Ensembl"/>
</dbReference>
<dbReference type="GO" id="GO:0016607">
    <property type="term" value="C:nuclear speck"/>
    <property type="evidence" value="ECO:0000314"/>
    <property type="project" value="LIFEdb"/>
</dbReference>
<dbReference type="GO" id="GO:0005654">
    <property type="term" value="C:nucleoplasm"/>
    <property type="evidence" value="ECO:0000314"/>
    <property type="project" value="HPA"/>
</dbReference>
<dbReference type="GO" id="GO:0005634">
    <property type="term" value="C:nucleus"/>
    <property type="evidence" value="ECO:0000314"/>
    <property type="project" value="UniProtKB"/>
</dbReference>
<dbReference type="GO" id="GO:0048188">
    <property type="term" value="C:Set1C/COMPASS complex"/>
    <property type="evidence" value="ECO:0000314"/>
    <property type="project" value="UniProtKB"/>
</dbReference>
<dbReference type="GO" id="GO:0000987">
    <property type="term" value="F:cis-regulatory region sequence-specific DNA binding"/>
    <property type="evidence" value="ECO:0007669"/>
    <property type="project" value="Ensembl"/>
</dbReference>
<dbReference type="GO" id="GO:0140002">
    <property type="term" value="F:histone H3K4me3 reader activity"/>
    <property type="evidence" value="ECO:0007669"/>
    <property type="project" value="Ensembl"/>
</dbReference>
<dbReference type="GO" id="GO:0035064">
    <property type="term" value="F:methylated histone binding"/>
    <property type="evidence" value="ECO:0000318"/>
    <property type="project" value="GO_Central"/>
</dbReference>
<dbReference type="GO" id="GO:0045322">
    <property type="term" value="F:unmethylated CpG binding"/>
    <property type="evidence" value="ECO:0000314"/>
    <property type="project" value="UniProtKB"/>
</dbReference>
<dbReference type="GO" id="GO:0008270">
    <property type="term" value="F:zinc ion binding"/>
    <property type="evidence" value="ECO:0007669"/>
    <property type="project" value="UniProtKB-KW"/>
</dbReference>
<dbReference type="GO" id="GO:0045893">
    <property type="term" value="P:positive regulation of DNA-templated transcription"/>
    <property type="evidence" value="ECO:0000314"/>
    <property type="project" value="UniProtKB"/>
</dbReference>
<dbReference type="GO" id="GO:0006355">
    <property type="term" value="P:regulation of DNA-templated transcription"/>
    <property type="evidence" value="ECO:0000314"/>
    <property type="project" value="UniProtKB"/>
</dbReference>
<dbReference type="CDD" id="cd15553">
    <property type="entry name" value="PHD_Cfp1"/>
    <property type="match status" value="1"/>
</dbReference>
<dbReference type="FunFam" id="3.30.40.10:FF:000138">
    <property type="entry name" value="CXXC-type zinc finger protein 1"/>
    <property type="match status" value="1"/>
</dbReference>
<dbReference type="Gene3D" id="3.30.40.10">
    <property type="entry name" value="Zinc/RING finger domain, C3HC4 (zinc finger)"/>
    <property type="match status" value="1"/>
</dbReference>
<dbReference type="InterPro" id="IPR022056">
    <property type="entry name" value="CpG-bd_C"/>
</dbReference>
<dbReference type="InterPro" id="IPR037869">
    <property type="entry name" value="Spp1/CFP1"/>
</dbReference>
<dbReference type="InterPro" id="IPR019786">
    <property type="entry name" value="Zinc_finger_PHD-type_CS"/>
</dbReference>
<dbReference type="InterPro" id="IPR002857">
    <property type="entry name" value="Znf_CXXC"/>
</dbReference>
<dbReference type="InterPro" id="IPR011011">
    <property type="entry name" value="Znf_FYVE_PHD"/>
</dbReference>
<dbReference type="InterPro" id="IPR001965">
    <property type="entry name" value="Znf_PHD"/>
</dbReference>
<dbReference type="InterPro" id="IPR019787">
    <property type="entry name" value="Znf_PHD-finger"/>
</dbReference>
<dbReference type="InterPro" id="IPR013083">
    <property type="entry name" value="Znf_RING/FYVE/PHD"/>
</dbReference>
<dbReference type="PANTHER" id="PTHR46174">
    <property type="entry name" value="CXXC-TYPE ZINC FINGER PROTEIN 1"/>
    <property type="match status" value="1"/>
</dbReference>
<dbReference type="PANTHER" id="PTHR46174:SF1">
    <property type="entry name" value="CXXC-TYPE ZINC FINGER PROTEIN 1"/>
    <property type="match status" value="1"/>
</dbReference>
<dbReference type="Pfam" id="PF12269">
    <property type="entry name" value="CpG_bind_C"/>
    <property type="match status" value="1"/>
</dbReference>
<dbReference type="Pfam" id="PF00628">
    <property type="entry name" value="PHD"/>
    <property type="match status" value="1"/>
</dbReference>
<dbReference type="Pfam" id="PF02008">
    <property type="entry name" value="zf-CXXC"/>
    <property type="match status" value="1"/>
</dbReference>
<dbReference type="SMART" id="SM00249">
    <property type="entry name" value="PHD"/>
    <property type="match status" value="1"/>
</dbReference>
<dbReference type="SUPFAM" id="SSF57903">
    <property type="entry name" value="FYVE/PHD zinc finger"/>
    <property type="match status" value="1"/>
</dbReference>
<dbReference type="PROSITE" id="PS51058">
    <property type="entry name" value="ZF_CXXC"/>
    <property type="match status" value="1"/>
</dbReference>
<dbReference type="PROSITE" id="PS01359">
    <property type="entry name" value="ZF_PHD_1"/>
    <property type="match status" value="1"/>
</dbReference>
<dbReference type="PROSITE" id="PS50016">
    <property type="entry name" value="ZF_PHD_2"/>
    <property type="match status" value="1"/>
</dbReference>
<comment type="function">
    <text evidence="12">Transcriptional activator that exhibits a unique DNA binding specificity for CpG unmethylated motifs with a preference for CpGG.</text>
</comment>
<comment type="subunit">
    <text evidence="1 8 9 10 11 12 13">Component of the SET1 complex, at least composed of the catalytic subunit (SETD1A or SETD1B), WDR5, WDR82, RBBP5, ASH2L/ASH2, CXXC1/CFP1 HCFC1 and DPY30. Interacts with SETD1A. Interacts with ZNF335. Interacts with PRDM9; this interaction does not link PRDM9-activated recombination hotspot sites with DSB machinery and is not required for the hotspot recognition pathway. Interacts with histone H3K4me3 (By similarity).</text>
</comment>
<comment type="interaction">
    <interactant intactId="EBI-949911">
        <id>Q9P0U4</id>
    </interactant>
    <interactant intactId="EBI-748397">
        <id>P50222</id>
        <label>MEOX2</label>
    </interactant>
    <organismsDiffer>false</organismsDiffer>
    <experiments>3</experiments>
</comment>
<comment type="interaction">
    <interactant intactId="EBI-949911">
        <id>Q9P0U4</id>
    </interactant>
    <interactant intactId="EBI-696162">
        <id>P60484</id>
        <label>PTEN</label>
    </interactant>
    <organismsDiffer>false</organismsDiffer>
    <experiments>2</experiments>
</comment>
<comment type="interaction">
    <interactant intactId="EBI-949911">
        <id>Q9P0U4</id>
    </interactant>
    <interactant intactId="EBI-592823">
        <id>Q15291</id>
        <label>RBBP5</label>
    </interactant>
    <organismsDiffer>false</organismsDiffer>
    <experiments>8</experiments>
</comment>
<comment type="interaction">
    <interactant intactId="EBI-949911">
        <id>Q9P0U4</id>
    </interactant>
    <interactant intactId="EBI-529518">
        <id>Q86VP1</id>
        <label>TAX1BP1</label>
    </interactant>
    <organismsDiffer>false</organismsDiffer>
    <experiments>3</experiments>
</comment>
<comment type="interaction">
    <interactant intactId="EBI-949911">
        <id>Q9P0U4</id>
    </interactant>
    <interactant intactId="EBI-366083">
        <id>P04637</id>
        <label>TP53</label>
    </interactant>
    <organismsDiffer>false</organismsDiffer>
    <experiments>7</experiments>
</comment>
<comment type="interaction">
    <interactant intactId="EBI-12743307">
        <id>Q9P0U4-2</id>
    </interactant>
    <interactant intactId="EBI-529518">
        <id>Q86VP1</id>
        <label>TAX1BP1</label>
    </interactant>
    <organismsDiffer>false</organismsDiffer>
    <experiments>3</experiments>
</comment>
<comment type="interaction">
    <interactant intactId="EBI-12743307">
        <id>Q9P0U4-2</id>
    </interactant>
    <interactant intactId="EBI-11897462">
        <id>Q8N4U5</id>
        <label>TCP11L2</label>
    </interactant>
    <organismsDiffer>false</organismsDiffer>
    <experiments>3</experiments>
</comment>
<comment type="subcellular location">
    <subcellularLocation>
        <location evidence="7 9">Nucleus speckle</location>
    </subcellularLocation>
    <subcellularLocation>
        <location evidence="1">Nucleus</location>
    </subcellularLocation>
    <text>Associated with euchromatin. During mitosis, excluded from condensed chromosomes.</text>
</comment>
<comment type="alternative products">
    <event type="alternative splicing"/>
    <isoform>
        <id>Q9P0U4-1</id>
        <name>1</name>
        <sequence type="displayed"/>
    </isoform>
    <isoform>
        <id>Q9P0U4-2</id>
        <name>2</name>
        <sequence type="described" ref="VSP_040132"/>
    </isoform>
</comment>
<comment type="tissue specificity">
    <text>Ubiquitous.</text>
</comment>
<comment type="domain">
    <text>The acidic domain carries the potential to activate transcription.</text>
</comment>
<comment type="PTM">
    <text>May be regulated by proteolysis.</text>
</comment>
<evidence type="ECO:0000250" key="1">
    <source>
        <dbReference type="UniProtKB" id="Q9CWW7"/>
    </source>
</evidence>
<evidence type="ECO:0000255" key="2"/>
<evidence type="ECO:0000255" key="3">
    <source>
        <dbReference type="PROSITE-ProRule" id="PRU00146"/>
    </source>
</evidence>
<evidence type="ECO:0000255" key="4">
    <source>
        <dbReference type="PROSITE-ProRule" id="PRU00509"/>
    </source>
</evidence>
<evidence type="ECO:0000256" key="5">
    <source>
        <dbReference type="SAM" id="MobiDB-lite"/>
    </source>
</evidence>
<evidence type="ECO:0000269" key="6">
    <source>
    </source>
</evidence>
<evidence type="ECO:0000269" key="7">
    <source>
    </source>
</evidence>
<evidence type="ECO:0000269" key="8">
    <source>
    </source>
</evidence>
<evidence type="ECO:0000269" key="9">
    <source>
    </source>
</evidence>
<evidence type="ECO:0000269" key="10">
    <source>
    </source>
</evidence>
<evidence type="ECO:0000269" key="11">
    <source>
    </source>
</evidence>
<evidence type="ECO:0000269" key="12">
    <source>
    </source>
</evidence>
<evidence type="ECO:0000269" key="13">
    <source>
    </source>
</evidence>
<evidence type="ECO:0000303" key="14">
    <source>
    </source>
</evidence>
<evidence type="ECO:0000305" key="15"/>
<evidence type="ECO:0007744" key="16">
    <source>
    </source>
</evidence>
<evidence type="ECO:0007744" key="17">
    <source>
    </source>
</evidence>
<evidence type="ECO:0007744" key="18">
    <source>
    </source>
</evidence>
<evidence type="ECO:0007744" key="19">
    <source>
    </source>
</evidence>
<evidence type="ECO:0007744" key="20">
    <source>
    </source>
</evidence>
<evidence type="ECO:0007829" key="21">
    <source>
        <dbReference type="PDB" id="3QMB"/>
    </source>
</evidence>
<evidence type="ECO:0007829" key="22">
    <source>
        <dbReference type="PDB" id="3QMD"/>
    </source>
</evidence>
<keyword id="KW-0002">3D-structure</keyword>
<keyword id="KW-0007">Acetylation</keyword>
<keyword id="KW-0010">Activator</keyword>
<keyword id="KW-0025">Alternative splicing</keyword>
<keyword id="KW-0175">Coiled coil</keyword>
<keyword id="KW-0238">DNA-binding</keyword>
<keyword id="KW-1017">Isopeptide bond</keyword>
<keyword id="KW-0479">Metal-binding</keyword>
<keyword id="KW-0539">Nucleus</keyword>
<keyword id="KW-0597">Phosphoprotein</keyword>
<keyword id="KW-1267">Proteomics identification</keyword>
<keyword id="KW-1185">Reference proteome</keyword>
<keyword id="KW-0804">Transcription</keyword>
<keyword id="KW-0805">Transcription regulation</keyword>
<keyword id="KW-0832">Ubl conjugation</keyword>
<keyword id="KW-0862">Zinc</keyword>
<keyword id="KW-0863">Zinc-finger</keyword>
<protein>
    <recommendedName>
        <fullName>CXXC-type zinc finger protein 1</fullName>
    </recommendedName>
    <alternativeName>
        <fullName>CpG-binding protein</fullName>
    </alternativeName>
    <alternativeName>
        <fullName>PHD finger and CXXC domain-containing protein 1</fullName>
    </alternativeName>
</protein>